<gene>
    <name type="ORF">UL49</name>
</gene>
<reference key="1">
    <citation type="journal article" date="1988" name="J. Gen. Virol.">
        <title>The complete DNA sequence of the long unique region in the genome of herpes simplex virus type 1.</title>
        <authorList>
            <person name="McGeoch D.J."/>
            <person name="Dalrymple M.A."/>
            <person name="Davison A.J."/>
            <person name="Dolan A."/>
            <person name="Frame M.C."/>
            <person name="McNab D."/>
            <person name="Perry L.J."/>
            <person name="Scott J.E."/>
            <person name="Taylor P."/>
        </authorList>
    </citation>
    <scope>NUCLEOTIDE SEQUENCE [LARGE SCALE GENOMIC DNA]</scope>
</reference>
<reference key="2">
    <citation type="journal article" date="2007" name="Microbes Infect.">
        <title>Determination and analysis of the DNA sequence of highly attenuated herpes simplex virus type 1 mutant HF10, a potential oncolytic virus.</title>
        <authorList>
            <person name="Ushijima Y."/>
            <person name="Luo C."/>
            <person name="Goshima F."/>
            <person name="Yamauchi Y."/>
            <person name="Kimura H."/>
            <person name="Nishiyama Y."/>
        </authorList>
    </citation>
    <scope>NUCLEOTIDE SEQUENCE [LARGE SCALE GENOMIC DNA]</scope>
    <source>
        <strain>Nonneuroinvasive mutant HF10</strain>
    </source>
</reference>
<reference key="3">
    <citation type="submission" date="2008-12" db="EMBL/GenBank/DDBJ databases">
        <title>Herpes simplex virus type 1 bacterial artificial chromosome.</title>
        <authorList>
            <person name="Cunningham C."/>
            <person name="Davison A.J."/>
        </authorList>
    </citation>
    <scope>NUCLEOTIDE SEQUENCE [LARGE SCALE GENOMIC DNA]</scope>
    <source>
        <strain>17 syn+</strain>
    </source>
</reference>
<reference key="4">
    <citation type="journal article" date="1992" name="J. Gen. Virol.">
        <title>The herpes simplex virus type 1 tegument protein VP22 is encoded by gene UL49.</title>
        <authorList>
            <person name="Elliott G.D."/>
            <person name="Meredith D.M."/>
        </authorList>
    </citation>
    <scope>IDENTIFICATION</scope>
    <scope>SUBCELLULAR LOCATION</scope>
    <scope>PHOSPHORYLATION</scope>
</reference>
<reference key="5">
    <citation type="journal article" date="1996" name="Virology">
        <title>Overexpression of the herpes simplex virus type 1 tegument protein VP22 increases its incorporation into virus particles.</title>
        <authorList>
            <person name="Leslie J."/>
            <person name="Rixon F.J."/>
            <person name="McLauchlan J."/>
        </authorList>
    </citation>
    <scope>SUBCELLULAR LOCATION</scope>
    <source>
        <strain>Isolate 1802</strain>
    </source>
</reference>
<reference key="6">
    <citation type="journal article" date="1998" name="J. Virol.">
        <title>Herpes simplex virus type 1 tegument protein VP22 induces the stabilization and hyperacetylation of microtubules.</title>
        <authorList>
            <person name="Elliott G."/>
            <person name="O'Hare P."/>
        </authorList>
    </citation>
    <scope>FUNCTION</scope>
</reference>
<reference key="7">
    <citation type="journal article" date="2002" name="J. Virol.">
        <title>Herpes simplex virus tegument protein VP22 contains overlapping domains for cytoplasmic localization, microtubule interaction, and chromatin binding.</title>
        <authorList>
            <person name="Martin A."/>
            <person name="O'Hare P."/>
            <person name="McLauchlan J."/>
            <person name="Elliott G."/>
        </authorList>
    </citation>
    <scope>SUBCELLULAR LOCATION</scope>
    <scope>FUNCTION</scope>
</reference>
<reference key="8">
    <citation type="journal article" date="2003" name="J. Gen. Virol.">
        <title>Herpes simplex virus type 1 tegument protein VP22 interacts with TAF-I proteins and inhibits nucleosome assembly but not regulation of histone acetylation by INHAT.</title>
        <authorList>
            <person name="van Leeuwen H."/>
            <person name="Okuwaki M."/>
            <person name="Hong R."/>
            <person name="Chakravarti D."/>
            <person name="Nagata K."/>
            <person name="O'Hare P."/>
        </authorList>
    </citation>
    <scope>FUNCTION</scope>
    <scope>INTERACTION WITH HOST SET</scope>
</reference>
<reference key="9">
    <citation type="journal article" date="2005" name="J. Virol.">
        <title>Nuclear localizations of the herpes simplex virus type 1 tegument proteins VP13/14, vhs, and VP16 precede VP22-dependent microtubule reorganization and VP22 nuclear import.</title>
        <authorList>
            <person name="Yedowitz J.C."/>
            <person name="Kotsakis A."/>
            <person name="Schlegel E.F."/>
            <person name="Blaho J.A."/>
        </authorList>
    </citation>
    <scope>SUBCELLULAR LOCATION</scope>
    <source>
        <strain>F</strain>
    </source>
</reference>
<reference key="10">
    <citation type="journal article" date="2007" name="J. Virol.">
        <title>Cytoplasmic residues of herpes simplex virus glycoprotein gE required for secondary envelopment and binding of tegument proteins VP22 and UL11 to gE and gD.</title>
        <authorList>
            <person name="Farnsworth A."/>
            <person name="Wisner T.W."/>
            <person name="Johnson D.C."/>
        </authorList>
    </citation>
    <scope>INTERACTION WITH GD AND GE</scope>
    <source>
        <strain>F</strain>
    </source>
</reference>
<reference key="11">
    <citation type="journal article" date="2007" name="Virology">
        <title>A conserved region of the herpes simplex virus type 1 tegument protein VP22 facilitates interaction with the cytoplasmic tail of glycoprotein E (gE).</title>
        <authorList>
            <person name="O'Regan K.J."/>
            <person name="Bucks M.A."/>
            <person name="Murphy M.A."/>
            <person name="Wills J.W."/>
            <person name="Courtney R.J."/>
        </authorList>
    </citation>
    <scope>INTERACTION WITH GE</scope>
    <source>
        <strain>17 syn+</strain>
    </source>
</reference>
<reference key="12">
    <citation type="journal article" date="2008" name="J. Virol.">
        <title>Simultaneous tracking of capsid, tegument, and envelope protein localization in living cells infected with triply fluorescent herpes simplex virus 1.</title>
        <authorList>
            <person name="Sugimoto K."/>
            <person name="Uema M."/>
            <person name="Sagara H."/>
            <person name="Tanaka M."/>
            <person name="Sata T."/>
            <person name="Hashimoto Y."/>
            <person name="Kawaguchi Y."/>
        </authorList>
    </citation>
    <scope>SUBCELLULAR LOCATION</scope>
    <source>
        <strain>F</strain>
    </source>
</reference>
<reference key="13">
    <citation type="journal article" date="2008" name="J. Virol.">
        <title>Comprehensive characterization of extracellular herpes simplex virus type 1 virions.</title>
        <authorList>
            <person name="Loret S."/>
            <person name="Guay G."/>
            <person name="Lippe R."/>
        </authorList>
    </citation>
    <scope>SUBCELLULAR LOCATION</scope>
    <source>
        <strain>F</strain>
    </source>
</reference>
<reference key="14">
    <citation type="journal article" date="2009" name="J. Virol.">
        <title>Virion incorporation of the herpes simplex virus type 1 tegument protein VP22 occurs via glycoprotein E-specific recruitment to the late secretory pathway.</title>
        <authorList>
            <person name="Stylianou J."/>
            <person name="Maringer K."/>
            <person name="Cook R."/>
            <person name="Bernard E."/>
            <person name="Elliott G."/>
        </authorList>
    </citation>
    <scope>SUBCELLULAR LOCATION</scope>
    <scope>INTERACTION WITH GE AND VP16</scope>
    <scope>LACK OF INTERACTION WITH GD</scope>
</reference>
<reference key="15">
    <citation type="journal article" date="2012" name="J. Virol.">
        <title>A network of protein interactions around the herpes simplex virus tegument protein VP22.</title>
        <authorList>
            <person name="Maringer K."/>
            <person name="Stylianou J."/>
            <person name="Elliott G."/>
        </authorList>
    </citation>
    <scope>FUNCTION</scope>
    <scope>INTERACTION WITH GE AND GM</scope>
</reference>
<reference key="16">
    <citation type="journal article" date="2012" name="J. Virol.">
        <title>Deletion of the herpes simplex virus 1 UL49 gene results in mRNA and protein translation defects that are complemented by secondary mutations in UL41.</title>
        <authorList>
            <person name="Mbong E.F."/>
            <person name="Woodley L."/>
            <person name="Dunkerley E."/>
            <person name="Schrimpf J.E."/>
            <person name="Morrison L.A."/>
            <person name="Duffy C."/>
        </authorList>
    </citation>
    <scope>FUNCTION</scope>
</reference>
<reference key="17">
    <citation type="journal article" date="2014" name="J. Virol.">
        <title>Elucidation of the block to herpes simplex virus egress in the absence of tegument protein UL16 reveals a novel interaction with VP22.</title>
        <authorList>
            <person name="Starkey J.L."/>
            <person name="Han J."/>
            <person name="Chadha P."/>
            <person name="Marsh J.A."/>
            <person name="Wills J.W."/>
        </authorList>
    </citation>
    <scope>FUNCTION</scope>
    <scope>INTERACTION WITH UL16</scope>
</reference>
<reference key="18">
    <citation type="journal article" date="2018" name="J. Virol.">
        <title>Herpes simplex virus 1 tegument protein VP22 abrogates cGAS/STING-mediated antiviral innate immunity.</title>
        <authorList>
            <person name="Huang J."/>
            <person name="You H."/>
            <person name="Su C."/>
            <person name="Li Y."/>
            <person name="Chen S."/>
            <person name="Zheng C."/>
        </authorList>
    </citation>
    <scope>FUNCTION</scope>
    <scope>INTERACTION WITH HOST CGAS</scope>
</reference>
<reference key="19">
    <citation type="journal article" date="2021" name="Mol. Cell">
        <title>Viral tegument proteins restrict cGAS-DNA phase separation to mediate immune evasion.</title>
        <authorList>
            <person name="Xu G."/>
            <person name="Liu C."/>
            <person name="Zhou S."/>
            <person name="Li Q."/>
            <person name="Feng Y."/>
            <person name="Sun P."/>
            <person name="Feng H."/>
            <person name="Gao Y."/>
            <person name="Zhu J."/>
            <person name="Luo X."/>
            <person name="Zhan Q."/>
            <person name="Liu S."/>
            <person name="Zhu S."/>
            <person name="Deng H."/>
            <person name="Li D."/>
            <person name="Gao P."/>
        </authorList>
    </citation>
    <scope>FUNCTION</scope>
    <scope>INTERACTION WITH HOST CGAS</scope>
</reference>
<comment type="function">
    <text evidence="3 4 12 13 14 15 16 18">Tegument protein that plays different roles during the time course of infection (PubMed:11967313, PubMed:22993164, PubMed:24131716, PubMed:9658087). Participates in both the accumulation of viral mRNAs and viral protein translation at late time of infection (PubMed:11967313, PubMed:22993164, PubMed:24131716, PubMed:9658087). Modulates the RNase activity of the virion host shutoff protein UL41 probably to ensure necessary levels of key cellular mRNAs and proteins (PubMed:22951838). Plays a role in microtubule reorganization that occurs after viral infection by stabilizing microtubule network (PubMed:11967313, PubMed:9658087). Finally, may prevent nucleosomal deposition onto the viral genome by interacting with and inhibiting host SET (PubMed:12917472). Plays a role in the inhibition of host innate immune system by targeting the CGAS enzymatic activity which is the principal cytosolic DNA sensor that detects invading viral DNA (PubMed:29793952, PubMed:34015248). Acts by mediating disruption of liquid-like droplets in which CGAS is activated, thereby preventing CGAS activity (PubMed:34015248).</text>
</comment>
<comment type="subunit">
    <text evidence="4 7 8 11 13 14 15 16">Interacts with gE (via C-terminus); this interaction is necessary for the recruitment of VP22 to the Golgi and its packaging into virions (PubMed:16997344, PubMed:17035313, PubMed:19279114, PubMed:22993164). Interacts with gM (via C-terminus) (PubMed:22993164). Interacts with VP16; this interaction allows the formation of a tripartite complex composed of VP16, VP22 and UL41/VHS (PubMed:19279114). According to a report interacts with gD (via C-terminus) (PubMed:17035313). According another publication, does not interact with gD (PubMed:19279114). Interacts with host CGAS (PubMed:29793952, PubMed:34015248). Interacts with host SET; this interaction may interfere with SET-mediated nucleosomal deposition onto the viral genome (PubMed:12917472). Interacts with the capsid-binding protein UL16 (PubMed:24131716).</text>
</comment>
<comment type="interaction">
    <interactant intactId="EBI-7490002">
        <id>P10233</id>
    </interactant>
    <interactant intactId="EBI-7489933">
        <id>P06492</id>
        <label>UL48</label>
    </interactant>
    <organismsDiffer>false</organismsDiffer>
    <experiments>2</experiments>
</comment>
<comment type="subcellular location">
    <subcellularLocation>
        <location evidence="10 17">Virion tegument</location>
    </subcellularLocation>
    <subcellularLocation>
        <location evidence="3 5 9 11">Host cytoplasm</location>
    </subcellularLocation>
    <subcellularLocation>
        <location evidence="3 6 9">Host nucleus</location>
    </subcellularLocation>
    <subcellularLocation>
        <location evidence="11">Host Golgi apparatus</location>
    </subcellularLocation>
    <text>One of the most abundant tegument protein (about 2000 copies per virion). Localizes in the cytoplasm at 8 hours postinfection and in the nucleus at 16 hours postinfection. During virion morphogenesis, this protein probably accumulates at the trans-Golgi where secondary envelopment occurs.</text>
</comment>
<comment type="PTM">
    <text evidence="20">Highly phosphorylated in the host cell. Packaging is selective for underphosphorylated forms.</text>
</comment>
<comment type="similarity">
    <text evidence="19">Belongs to the alphaherpesvirinae VP22 tegument protein family.</text>
</comment>
<protein>
    <recommendedName>
        <fullName>Tegument protein VP22</fullName>
    </recommendedName>
</protein>
<evidence type="ECO:0000250" key="1">
    <source>
        <dbReference type="UniProtKB" id="P30022"/>
    </source>
</evidence>
<evidence type="ECO:0000256" key="2">
    <source>
        <dbReference type="SAM" id="MobiDB-lite"/>
    </source>
</evidence>
<evidence type="ECO:0000269" key="3">
    <source>
    </source>
</evidence>
<evidence type="ECO:0000269" key="4">
    <source>
    </source>
</evidence>
<evidence type="ECO:0000269" key="5">
    <source>
    </source>
</evidence>
<evidence type="ECO:0000269" key="6">
    <source>
    </source>
</evidence>
<evidence type="ECO:0000269" key="7">
    <source>
    </source>
</evidence>
<evidence type="ECO:0000269" key="8">
    <source>
    </source>
</evidence>
<evidence type="ECO:0000269" key="9">
    <source>
    </source>
</evidence>
<evidence type="ECO:0000269" key="10">
    <source>
    </source>
</evidence>
<evidence type="ECO:0000269" key="11">
    <source>
    </source>
</evidence>
<evidence type="ECO:0000269" key="12">
    <source>
    </source>
</evidence>
<evidence type="ECO:0000269" key="13">
    <source>
    </source>
</evidence>
<evidence type="ECO:0000269" key="14">
    <source>
    </source>
</evidence>
<evidence type="ECO:0000269" key="15">
    <source>
    </source>
</evidence>
<evidence type="ECO:0000269" key="16">
    <source>
    </source>
</evidence>
<evidence type="ECO:0000269" key="17">
    <source>
    </source>
</evidence>
<evidence type="ECO:0000269" key="18">
    <source>
    </source>
</evidence>
<evidence type="ECO:0000305" key="19"/>
<evidence type="ECO:0000305" key="20">
    <source>
    </source>
</evidence>
<evidence type="ECO:0007829" key="21">
    <source>
        <dbReference type="PDB" id="4XAL"/>
    </source>
</evidence>
<keyword id="KW-0002">3D-structure</keyword>
<keyword id="KW-1035">Host cytoplasm</keyword>
<keyword id="KW-1040">Host Golgi apparatus</keyword>
<keyword id="KW-1048">Host nucleus</keyword>
<keyword id="KW-0945">Host-virus interaction</keyword>
<keyword id="KW-1090">Inhibition of host innate immune response by virus</keyword>
<keyword id="KW-0597">Phosphoprotein</keyword>
<keyword id="KW-1185">Reference proteome</keyword>
<keyword id="KW-0899">Viral immunoevasion</keyword>
<keyword id="KW-0946">Virion</keyword>
<keyword id="KW-0920">Virion tegument</keyword>
<name>VP22_HHV11</name>
<proteinExistence type="evidence at protein level"/>
<organism>
    <name type="scientific">Human herpesvirus 1 (strain 17)</name>
    <name type="common">HHV-1</name>
    <name type="synonym">Human herpes simplex virus 1</name>
    <dbReference type="NCBI Taxonomy" id="10299"/>
    <lineage>
        <taxon>Viruses</taxon>
        <taxon>Duplodnaviria</taxon>
        <taxon>Heunggongvirae</taxon>
        <taxon>Peploviricota</taxon>
        <taxon>Herviviricetes</taxon>
        <taxon>Herpesvirales</taxon>
        <taxon>Orthoherpesviridae</taxon>
        <taxon>Alphaherpesvirinae</taxon>
        <taxon>Simplexvirus</taxon>
        <taxon>Simplexvirus humanalpha1</taxon>
        <taxon>Human herpesvirus 1</taxon>
    </lineage>
</organism>
<feature type="chain" id="PRO_0000116093" description="Tegument protein VP22">
    <location>
        <begin position="1"/>
        <end position="301"/>
    </location>
</feature>
<feature type="region of interest" description="Disordered" evidence="2">
    <location>
        <begin position="1"/>
        <end position="171"/>
    </location>
</feature>
<feature type="region of interest" description="Interaction with gE" evidence="8">
    <location>
        <begin position="174"/>
        <end position="267"/>
    </location>
</feature>
<feature type="region of interest" description="Disordered" evidence="2">
    <location>
        <begin position="269"/>
        <end position="301"/>
    </location>
</feature>
<feature type="short sequence motif" description="Nuclear localization signal" evidence="1">
    <location>
        <begin position="163"/>
        <end position="166"/>
    </location>
</feature>
<feature type="short sequence motif" description="Nuclear export signal" evidence="1">
    <location>
        <begin position="232"/>
        <end position="244"/>
    </location>
</feature>
<feature type="compositionally biased region" description="Low complexity" evidence="2">
    <location>
        <begin position="113"/>
        <end position="124"/>
    </location>
</feature>
<feature type="compositionally biased region" description="Low complexity" evidence="2">
    <location>
        <begin position="269"/>
        <end position="281"/>
    </location>
</feature>
<feature type="sequence variant" description="In strain: 17 syn+.">
    <original>E</original>
    <variation>G</variation>
    <location>
        <position position="20"/>
    </location>
</feature>
<feature type="sequence variant" description="In strain: Nonneuroinvasive mutant HF10.">
    <original>P</original>
    <variation>Q</variation>
    <location>
        <position position="135"/>
    </location>
</feature>
<feature type="sequence variant" description="In strain: Nonneuroinvasive mutant HF10.">
    <original>R</original>
    <variation>C</variation>
    <location>
        <position position="141"/>
    </location>
</feature>
<feature type="sequence variant" description="In strain: 17 syn+.">
    <original>L</original>
    <variation>I</variation>
    <location>
        <position position="220"/>
    </location>
</feature>
<feature type="strand" evidence="21">
    <location>
        <begin position="182"/>
        <end position="184"/>
    </location>
</feature>
<feature type="helix" evidence="21">
    <location>
        <begin position="191"/>
        <end position="224"/>
    </location>
</feature>
<feature type="helix" evidence="21">
    <location>
        <begin position="229"/>
        <end position="238"/>
    </location>
</feature>
<feature type="strand" evidence="21">
    <location>
        <begin position="241"/>
        <end position="244"/>
    </location>
</feature>
<feature type="helix" evidence="21">
    <location>
        <begin position="248"/>
        <end position="250"/>
    </location>
</feature>
<feature type="helix" evidence="21">
    <location>
        <begin position="251"/>
        <end position="257"/>
    </location>
</feature>
<dbReference type="EMBL" id="X14112">
    <property type="protein sequence ID" value="CAA32299.1"/>
    <property type="molecule type" value="Genomic_DNA"/>
</dbReference>
<dbReference type="EMBL" id="DQ889502">
    <property type="protein sequence ID" value="ABI63510.1"/>
    <property type="molecule type" value="Genomic_DNA"/>
</dbReference>
<dbReference type="EMBL" id="FJ593289">
    <property type="protein sequence ID" value="ACM62272.1"/>
    <property type="molecule type" value="Genomic_DNA"/>
</dbReference>
<dbReference type="PIR" id="D30089">
    <property type="entry name" value="WMBEF9"/>
</dbReference>
<dbReference type="RefSeq" id="YP_009137124.1">
    <property type="nucleotide sequence ID" value="NC_001806.2"/>
</dbReference>
<dbReference type="PDB" id="4XAL">
    <property type="method" value="X-ray"/>
    <property type="resolution" value="1.87 A"/>
    <property type="chains" value="A=174-281"/>
</dbReference>
<dbReference type="PDBsum" id="4XAL"/>
<dbReference type="SMR" id="P10233"/>
<dbReference type="BioGRID" id="971444">
    <property type="interactions" value="10"/>
</dbReference>
<dbReference type="DIP" id="DIP-57160N"/>
<dbReference type="IntAct" id="P10233">
    <property type="interactions" value="3"/>
</dbReference>
<dbReference type="MINT" id="P10233"/>
<dbReference type="GeneID" id="2703417"/>
<dbReference type="KEGG" id="vg:2703417"/>
<dbReference type="EvolutionaryTrace" id="P10233"/>
<dbReference type="Proteomes" id="UP000009294">
    <property type="component" value="Segment"/>
</dbReference>
<dbReference type="Proteomes" id="UP000180652">
    <property type="component" value="Segment"/>
</dbReference>
<dbReference type="GO" id="GO:0044177">
    <property type="term" value="C:host cell Golgi apparatus"/>
    <property type="evidence" value="ECO:0007669"/>
    <property type="project" value="UniProtKB-SubCell"/>
</dbReference>
<dbReference type="GO" id="GO:0042025">
    <property type="term" value="C:host cell nucleus"/>
    <property type="evidence" value="ECO:0007669"/>
    <property type="project" value="UniProtKB-SubCell"/>
</dbReference>
<dbReference type="GO" id="GO:0019033">
    <property type="term" value="C:viral tegument"/>
    <property type="evidence" value="ECO:0007669"/>
    <property type="project" value="UniProtKB-SubCell"/>
</dbReference>
<dbReference type="GO" id="GO:0052170">
    <property type="term" value="P:symbiont-mediated suppression of host innate immune response"/>
    <property type="evidence" value="ECO:0000314"/>
    <property type="project" value="UniProtKB"/>
</dbReference>
<dbReference type="InterPro" id="IPR006908">
    <property type="entry name" value="Herpes_UL49"/>
</dbReference>
<dbReference type="Pfam" id="PF04823">
    <property type="entry name" value="Herpes_UL49_2"/>
    <property type="match status" value="1"/>
</dbReference>
<sequence length="301" mass="32254">MTSRRSVKSGPREVPRDEYEDLYYTPSSGMASPDSPPDTSRRGALQTRSRQRGEVRFVQYDESDYALYGGSSSEDDEHPEVPRTRRPVSGAVLSGPGPARAPPPPAGSGGAGRTPTTAPRAPRTQRVATKAPAAPAAETTRGRKSAQPESAALPDAPASTAPTRSKTPAQGLARKLHFSTAPPNPDAPWTPRVAGFNKRVFCAAVGRLAAMHARMAAVQLWDMSRPRTDEDLNELLGITTIRVTVCEGKNLLQRANELVNPDVVQDVDAATATRGRSAASRPTERPRAPARSASRPRRPVE</sequence>
<accession>P10233</accession>
<accession>B9VQH7</accession>
<accession>Q09I85</accession>
<organismHost>
    <name type="scientific">Homo sapiens</name>
    <name type="common">Human</name>
    <dbReference type="NCBI Taxonomy" id="9606"/>
</organismHost>